<comment type="function">
    <text evidence="1">Calmodulin acts as part of a calcium signal transduction pathway by mediating the control of a large number of enzymes, ion channels, aquaporins and other proteins through calcium-binding. Calcium-binding is required for the activation of calmodulin. Among the enzymes to be stimulated by the calmodulin-calcium complex are a number of protein kinases, such as myosin light-chain kinases and calmodulin-dependent protein kinase type II (CaMK2), and phosphatases.</text>
</comment>
<comment type="miscellaneous">
    <text>This protein has four functional calcium-binding sites.</text>
</comment>
<comment type="similarity">
    <text evidence="3">Belongs to the calmodulin family.</text>
</comment>
<accession>Q9U6D3</accession>
<organism>
    <name type="scientific">Myxine glutinosa</name>
    <name type="common">Atlantic hagfish</name>
    <dbReference type="NCBI Taxonomy" id="7769"/>
    <lineage>
        <taxon>Eukaryota</taxon>
        <taxon>Metazoa</taxon>
        <taxon>Chordata</taxon>
        <taxon>Craniata</taxon>
        <taxon>Vertebrata</taxon>
        <taxon>Cyclostomata</taxon>
        <taxon>Myxini</taxon>
        <taxon>Myxiniformes</taxon>
        <taxon>Myxinidae</taxon>
        <taxon>Myxininae</taxon>
        <taxon>Myxine</taxon>
    </lineage>
</organism>
<protein>
    <recommendedName>
        <fullName>Calmodulin</fullName>
        <shortName>CaM</shortName>
    </recommendedName>
</protein>
<reference key="1">
    <citation type="submission" date="1999-09" db="EMBL/GenBank/DDBJ databases">
        <title>Characterization of a cDNA encoding calmodulin from the Atlantic hagfish (Myxine glutinosa).</title>
        <authorList>
            <person name="White G.P."/>
            <person name="Cunningham C."/>
        </authorList>
    </citation>
    <scope>NUCLEOTIDE SEQUENCE [MRNA]</scope>
    <source>
        <tissue>Intestine</tissue>
    </source>
</reference>
<name>CALM_MYXGL</name>
<sequence>MADQLTEEQIAEFKEAFSLFDKDGDGTITTKELGTVMRSLGQNPTEAELQDMINEVNADGNGTIDFPEFLTMMARKMKDTDSEEEIREAFRVFDKDGNGYISAAELRHVMTNLGEKLTDEEVDEMIREADIDGDGQVNYEEFVQMMTAK</sequence>
<keyword id="KW-0007">Acetylation</keyword>
<keyword id="KW-0106">Calcium</keyword>
<keyword id="KW-0479">Metal-binding</keyword>
<keyword id="KW-0488">Methylation</keyword>
<keyword id="KW-0677">Repeat</keyword>
<proteinExistence type="evidence at transcript level"/>
<feature type="initiator methionine" description="Removed" evidence="1">
    <location>
        <position position="1"/>
    </location>
</feature>
<feature type="chain" id="PRO_0000198236" description="Calmodulin">
    <location>
        <begin position="2"/>
        <end position="149"/>
    </location>
</feature>
<feature type="domain" description="EF-hand 1" evidence="2">
    <location>
        <begin position="8"/>
        <end position="43"/>
    </location>
</feature>
<feature type="domain" description="EF-hand 2" evidence="2">
    <location>
        <begin position="44"/>
        <end position="79"/>
    </location>
</feature>
<feature type="domain" description="EF-hand 3" evidence="2">
    <location>
        <begin position="81"/>
        <end position="116"/>
    </location>
</feature>
<feature type="domain" description="EF-hand 4" evidence="2">
    <location>
        <begin position="117"/>
        <end position="149"/>
    </location>
</feature>
<feature type="binding site" evidence="2">
    <location>
        <position position="21"/>
    </location>
    <ligand>
        <name>Ca(2+)</name>
        <dbReference type="ChEBI" id="CHEBI:29108"/>
        <label>1</label>
    </ligand>
</feature>
<feature type="binding site" evidence="2">
    <location>
        <position position="23"/>
    </location>
    <ligand>
        <name>Ca(2+)</name>
        <dbReference type="ChEBI" id="CHEBI:29108"/>
        <label>1</label>
    </ligand>
</feature>
<feature type="binding site" evidence="2">
    <location>
        <position position="25"/>
    </location>
    <ligand>
        <name>Ca(2+)</name>
        <dbReference type="ChEBI" id="CHEBI:29108"/>
        <label>1</label>
    </ligand>
</feature>
<feature type="binding site" evidence="2">
    <location>
        <position position="27"/>
    </location>
    <ligand>
        <name>Ca(2+)</name>
        <dbReference type="ChEBI" id="CHEBI:29108"/>
        <label>1</label>
    </ligand>
</feature>
<feature type="binding site" evidence="2">
    <location>
        <position position="32"/>
    </location>
    <ligand>
        <name>Ca(2+)</name>
        <dbReference type="ChEBI" id="CHEBI:29108"/>
        <label>1</label>
    </ligand>
</feature>
<feature type="binding site" evidence="3">
    <location>
        <position position="59"/>
    </location>
    <ligand>
        <name>Ca(2+)</name>
        <dbReference type="ChEBI" id="CHEBI:29108"/>
        <label>2</label>
    </ligand>
</feature>
<feature type="binding site" evidence="3">
    <location>
        <position position="61"/>
    </location>
    <ligand>
        <name>Ca(2+)</name>
        <dbReference type="ChEBI" id="CHEBI:29108"/>
        <label>2</label>
    </ligand>
</feature>
<feature type="binding site" evidence="3">
    <location>
        <position position="63"/>
    </location>
    <ligand>
        <name>Ca(2+)</name>
        <dbReference type="ChEBI" id="CHEBI:29108"/>
        <label>2</label>
    </ligand>
</feature>
<feature type="binding site" evidence="3">
    <location>
        <position position="68"/>
    </location>
    <ligand>
        <name>Ca(2+)</name>
        <dbReference type="ChEBI" id="CHEBI:29108"/>
        <label>2</label>
    </ligand>
</feature>
<feature type="binding site" evidence="2">
    <location>
        <position position="94"/>
    </location>
    <ligand>
        <name>Ca(2+)</name>
        <dbReference type="ChEBI" id="CHEBI:29108"/>
        <label>3</label>
    </ligand>
</feature>
<feature type="binding site" evidence="2">
    <location>
        <position position="96"/>
    </location>
    <ligand>
        <name>Ca(2+)</name>
        <dbReference type="ChEBI" id="CHEBI:29108"/>
        <label>3</label>
    </ligand>
</feature>
<feature type="binding site" evidence="2">
    <location>
        <position position="98"/>
    </location>
    <ligand>
        <name>Ca(2+)</name>
        <dbReference type="ChEBI" id="CHEBI:29108"/>
        <label>3</label>
    </ligand>
</feature>
<feature type="binding site" evidence="2">
    <location>
        <position position="100"/>
    </location>
    <ligand>
        <name>Ca(2+)</name>
        <dbReference type="ChEBI" id="CHEBI:29108"/>
        <label>3</label>
    </ligand>
</feature>
<feature type="binding site" evidence="2">
    <location>
        <position position="105"/>
    </location>
    <ligand>
        <name>Ca(2+)</name>
        <dbReference type="ChEBI" id="CHEBI:29108"/>
        <label>3</label>
    </ligand>
</feature>
<feature type="binding site" evidence="2">
    <location>
        <position position="130"/>
    </location>
    <ligand>
        <name>Ca(2+)</name>
        <dbReference type="ChEBI" id="CHEBI:29108"/>
        <label>4</label>
    </ligand>
</feature>
<feature type="binding site" evidence="2">
    <location>
        <position position="132"/>
    </location>
    <ligand>
        <name>Ca(2+)</name>
        <dbReference type="ChEBI" id="CHEBI:29108"/>
        <label>4</label>
    </ligand>
</feature>
<feature type="binding site" evidence="2">
    <location>
        <position position="134"/>
    </location>
    <ligand>
        <name>Ca(2+)</name>
        <dbReference type="ChEBI" id="CHEBI:29108"/>
        <label>4</label>
    </ligand>
</feature>
<feature type="binding site" evidence="2">
    <location>
        <position position="136"/>
    </location>
    <ligand>
        <name>Ca(2+)</name>
        <dbReference type="ChEBI" id="CHEBI:29108"/>
        <label>4</label>
    </ligand>
</feature>
<feature type="binding site" evidence="2">
    <location>
        <position position="141"/>
    </location>
    <ligand>
        <name>Ca(2+)</name>
        <dbReference type="ChEBI" id="CHEBI:29108"/>
        <label>4</label>
    </ligand>
</feature>
<feature type="modified residue" description="N-acetylalanine" evidence="1">
    <location>
        <position position="2"/>
    </location>
</feature>
<feature type="modified residue" description="N6,N6,N6-trimethyllysine" evidence="1">
    <location>
        <position position="116"/>
    </location>
</feature>
<evidence type="ECO:0000250" key="1">
    <source>
        <dbReference type="UniProtKB" id="P0DP23"/>
    </source>
</evidence>
<evidence type="ECO:0000255" key="2">
    <source>
        <dbReference type="PROSITE-ProRule" id="PRU00448"/>
    </source>
</evidence>
<evidence type="ECO:0000305" key="3"/>
<dbReference type="EMBL" id="AF187305">
    <property type="protein sequence ID" value="AAD56955.1"/>
    <property type="molecule type" value="mRNA"/>
</dbReference>
<dbReference type="SMR" id="Q9U6D3"/>
<dbReference type="GO" id="GO:0016460">
    <property type="term" value="C:myosin II complex"/>
    <property type="evidence" value="ECO:0007669"/>
    <property type="project" value="TreeGrafter"/>
</dbReference>
<dbReference type="GO" id="GO:0005509">
    <property type="term" value="F:calcium ion binding"/>
    <property type="evidence" value="ECO:0007669"/>
    <property type="project" value="InterPro"/>
</dbReference>
<dbReference type="CDD" id="cd00051">
    <property type="entry name" value="EFh"/>
    <property type="match status" value="2"/>
</dbReference>
<dbReference type="FunFam" id="1.10.238.10:FF:000527">
    <property type="entry name" value="Calmodulin-3"/>
    <property type="match status" value="1"/>
</dbReference>
<dbReference type="Gene3D" id="1.10.238.10">
    <property type="entry name" value="EF-hand"/>
    <property type="match status" value="3"/>
</dbReference>
<dbReference type="InterPro" id="IPR050230">
    <property type="entry name" value="CALM/Myosin/TropC-like"/>
</dbReference>
<dbReference type="InterPro" id="IPR011992">
    <property type="entry name" value="EF-hand-dom_pair"/>
</dbReference>
<dbReference type="InterPro" id="IPR018247">
    <property type="entry name" value="EF_Hand_1_Ca_BS"/>
</dbReference>
<dbReference type="InterPro" id="IPR002048">
    <property type="entry name" value="EF_hand_dom"/>
</dbReference>
<dbReference type="PANTHER" id="PTHR23048:SF0">
    <property type="entry name" value="CALMODULIN LIKE 3"/>
    <property type="match status" value="1"/>
</dbReference>
<dbReference type="PANTHER" id="PTHR23048">
    <property type="entry name" value="MYOSIN LIGHT CHAIN 1, 3"/>
    <property type="match status" value="1"/>
</dbReference>
<dbReference type="Pfam" id="PF13499">
    <property type="entry name" value="EF-hand_7"/>
    <property type="match status" value="2"/>
</dbReference>
<dbReference type="SMART" id="SM00054">
    <property type="entry name" value="EFh"/>
    <property type="match status" value="4"/>
</dbReference>
<dbReference type="SUPFAM" id="SSF47473">
    <property type="entry name" value="EF-hand"/>
    <property type="match status" value="1"/>
</dbReference>
<dbReference type="PROSITE" id="PS00018">
    <property type="entry name" value="EF_HAND_1"/>
    <property type="match status" value="3"/>
</dbReference>
<dbReference type="PROSITE" id="PS50222">
    <property type="entry name" value="EF_HAND_2"/>
    <property type="match status" value="4"/>
</dbReference>